<name>3S11_HOPST</name>
<feature type="signal peptide" evidence="1">
    <location>
        <begin position="1"/>
        <end position="21"/>
    </location>
</feature>
<feature type="chain" id="PRO_5000279912" description="Short neurotoxin 1">
    <location>
        <begin position="22"/>
        <end position="81"/>
    </location>
</feature>
<feature type="disulfide bond" evidence="2">
    <location>
        <begin position="24"/>
        <end position="43"/>
    </location>
</feature>
<feature type="disulfide bond" evidence="2">
    <location>
        <begin position="38"/>
        <end position="60"/>
    </location>
</feature>
<feature type="disulfide bond" evidence="2">
    <location>
        <begin position="62"/>
        <end position="73"/>
    </location>
</feature>
<feature type="disulfide bond" evidence="2">
    <location>
        <begin position="74"/>
        <end position="79"/>
    </location>
</feature>
<protein>
    <recommendedName>
        <fullName>Short neurotoxin 1</fullName>
        <shortName>SNTX-1</shortName>
    </recommendedName>
</protein>
<organism>
    <name type="scientific">Hoplocephalus stephensii</name>
    <name type="common">Stephens's banded snake</name>
    <dbReference type="NCBI Taxonomy" id="196418"/>
    <lineage>
        <taxon>Eukaryota</taxon>
        <taxon>Metazoa</taxon>
        <taxon>Chordata</taxon>
        <taxon>Craniata</taxon>
        <taxon>Vertebrata</taxon>
        <taxon>Euteleostomi</taxon>
        <taxon>Lepidosauria</taxon>
        <taxon>Squamata</taxon>
        <taxon>Bifurcata</taxon>
        <taxon>Unidentata</taxon>
        <taxon>Episquamata</taxon>
        <taxon>Toxicofera</taxon>
        <taxon>Serpentes</taxon>
        <taxon>Colubroidea</taxon>
        <taxon>Elapidae</taxon>
        <taxon>Notechinae</taxon>
        <taxon>Hoplocephalus</taxon>
    </lineage>
</organism>
<evidence type="ECO:0000250" key="1"/>
<evidence type="ECO:0000250" key="2">
    <source>
        <dbReference type="UniProtKB" id="P0C1Z0"/>
    </source>
</evidence>
<evidence type="ECO:0000250" key="3">
    <source>
        <dbReference type="UniProtKB" id="P60775"/>
    </source>
</evidence>
<evidence type="ECO:0000305" key="4"/>
<accession>A8HDJ9</accession>
<proteinExistence type="inferred from homology"/>
<keyword id="KW-0008">Acetylcholine receptor inhibiting toxin</keyword>
<keyword id="KW-1015">Disulfide bond</keyword>
<keyword id="KW-0872">Ion channel impairing toxin</keyword>
<keyword id="KW-0528">Neurotoxin</keyword>
<keyword id="KW-0629">Postsynaptic neurotoxin</keyword>
<keyword id="KW-0964">Secreted</keyword>
<keyword id="KW-0732">Signal</keyword>
<keyword id="KW-0800">Toxin</keyword>
<dbReference type="EMBL" id="DQ917504">
    <property type="protein sequence ID" value="ABK63533.1"/>
    <property type="molecule type" value="mRNA"/>
</dbReference>
<dbReference type="SMR" id="A8HDJ9"/>
<dbReference type="GO" id="GO:0005576">
    <property type="term" value="C:extracellular region"/>
    <property type="evidence" value="ECO:0007669"/>
    <property type="project" value="UniProtKB-SubCell"/>
</dbReference>
<dbReference type="GO" id="GO:0030550">
    <property type="term" value="F:acetylcholine receptor inhibitor activity"/>
    <property type="evidence" value="ECO:0007669"/>
    <property type="project" value="UniProtKB-KW"/>
</dbReference>
<dbReference type="GO" id="GO:0099106">
    <property type="term" value="F:ion channel regulator activity"/>
    <property type="evidence" value="ECO:0007669"/>
    <property type="project" value="UniProtKB-KW"/>
</dbReference>
<dbReference type="GO" id="GO:0090729">
    <property type="term" value="F:toxin activity"/>
    <property type="evidence" value="ECO:0007669"/>
    <property type="project" value="UniProtKB-KW"/>
</dbReference>
<dbReference type="CDD" id="cd00206">
    <property type="entry name" value="TFP_snake_toxin"/>
    <property type="match status" value="1"/>
</dbReference>
<dbReference type="Gene3D" id="2.10.60.10">
    <property type="entry name" value="CD59"/>
    <property type="match status" value="1"/>
</dbReference>
<dbReference type="InterPro" id="IPR003571">
    <property type="entry name" value="Snake_3FTx"/>
</dbReference>
<dbReference type="InterPro" id="IPR045860">
    <property type="entry name" value="Snake_toxin-like_sf"/>
</dbReference>
<dbReference type="InterPro" id="IPR018354">
    <property type="entry name" value="Snake_toxin_con_site"/>
</dbReference>
<dbReference type="InterPro" id="IPR054131">
    <property type="entry name" value="Toxin_cobra-type"/>
</dbReference>
<dbReference type="Pfam" id="PF21947">
    <property type="entry name" value="Toxin_cobra-type"/>
    <property type="match status" value="1"/>
</dbReference>
<dbReference type="SUPFAM" id="SSF57302">
    <property type="entry name" value="Snake toxin-like"/>
    <property type="match status" value="1"/>
</dbReference>
<dbReference type="PROSITE" id="PS00272">
    <property type="entry name" value="SNAKE_TOXIN"/>
    <property type="match status" value="1"/>
</dbReference>
<sequence length="81" mass="8966">MKTLLLTLVVVTIVCLDLGYTMTCCNQQSSQPKTTKTCAESSCYKKTWRDHRGTITERGCGCPSVKPGIQLECCKTNECNN</sequence>
<reference key="1">
    <citation type="journal article" date="2007" name="Cell. Mol. Life Sci.">
        <title>Distinct activities of novel neurotoxins from Australian venomous snakes for nicotinic acetylcholine receptors.</title>
        <authorList>
            <person name="St Pierre L."/>
            <person name="Fischer H."/>
            <person name="Adams D.J."/>
            <person name="Schenning M."/>
            <person name="Lavidis N."/>
            <person name="de Jersey J."/>
            <person name="Masci P.P."/>
            <person name="Lavin M.F."/>
        </authorList>
    </citation>
    <scope>NUCLEOTIDE SEQUENCE [MRNA]</scope>
    <source>
        <tissue>Venom gland</tissue>
    </source>
</reference>
<comment type="function">
    <text evidence="3">Binds to muscle nicotinic acetylcholine receptor (nAChR) and inhibit acetylcholine from binding to the receptor, thereby impairing neuromuscular transmission.</text>
</comment>
<comment type="subcellular location">
    <subcellularLocation>
        <location evidence="1">Secreted</location>
    </subcellularLocation>
</comment>
<comment type="tissue specificity">
    <text evidence="4">Expressed by the venom gland.</text>
</comment>
<comment type="similarity">
    <text evidence="4">Belongs to the three-finger toxin family. Short-chain subfamily. Type I alpha-neurotoxin sub-subfamily.</text>
</comment>